<name>GPSB_STRP1</name>
<comment type="function">
    <text evidence="1">Divisome component that associates with the complex late in its assembly, after the Z-ring is formed, and is dependent on DivIC and PBP2B for its recruitment to the divisome. Together with EzrA, is a key component of the system that regulates PBP1 localization during cell cycle progression. Its main role could be the removal of PBP1 from the cell pole after pole maturation is completed. Also contributes to the recruitment of PBP1 to the division complex. Not essential for septum formation.</text>
</comment>
<comment type="subunit">
    <text evidence="1">Forms polymers through the coiled coil domains. Interacts with PBP1, MreC and EzrA.</text>
</comment>
<comment type="subcellular location">
    <subcellularLocation>
        <location evidence="1">Cytoplasm</location>
    </subcellularLocation>
    <text evidence="1">Shuttles between the lateral wall and the division site in a cell cycle-dependent manner.</text>
</comment>
<comment type="similarity">
    <text evidence="1">Belongs to the GpsB family.</text>
</comment>
<protein>
    <recommendedName>
        <fullName evidence="1">Cell cycle protein GpsB</fullName>
    </recommendedName>
    <alternativeName>
        <fullName evidence="1">Guiding PBP1-shuttling protein</fullName>
    </alternativeName>
</protein>
<dbReference type="EMBL" id="AE004092">
    <property type="protein sequence ID" value="AAK34413.1"/>
    <property type="molecule type" value="Genomic_DNA"/>
</dbReference>
<dbReference type="EMBL" id="CP000017">
    <property type="protein sequence ID" value="AAZ51970.1"/>
    <property type="molecule type" value="Genomic_DNA"/>
</dbReference>
<dbReference type="RefSeq" id="NP_269692.1">
    <property type="nucleotide sequence ID" value="NC_002737.2"/>
</dbReference>
<dbReference type="SMR" id="Q99YL4"/>
<dbReference type="PaxDb" id="1314-HKU360_01403"/>
<dbReference type="KEGG" id="spy:SPy_1646"/>
<dbReference type="KEGG" id="spz:M5005_Spy1352"/>
<dbReference type="PATRIC" id="fig|160490.10.peg.1434"/>
<dbReference type="HOGENOM" id="CLU_140309_1_0_9"/>
<dbReference type="OMA" id="MEQVKYT"/>
<dbReference type="Proteomes" id="UP000000750">
    <property type="component" value="Chromosome"/>
</dbReference>
<dbReference type="GO" id="GO:0005737">
    <property type="term" value="C:cytoplasm"/>
    <property type="evidence" value="ECO:0007669"/>
    <property type="project" value="UniProtKB-SubCell"/>
</dbReference>
<dbReference type="GO" id="GO:0051301">
    <property type="term" value="P:cell division"/>
    <property type="evidence" value="ECO:0007669"/>
    <property type="project" value="UniProtKB-UniRule"/>
</dbReference>
<dbReference type="GO" id="GO:0008360">
    <property type="term" value="P:regulation of cell shape"/>
    <property type="evidence" value="ECO:0007669"/>
    <property type="project" value="UniProtKB-UniRule"/>
</dbReference>
<dbReference type="Gene3D" id="6.10.250.660">
    <property type="match status" value="1"/>
</dbReference>
<dbReference type="HAMAP" id="MF_02011">
    <property type="entry name" value="GpsB"/>
    <property type="match status" value="1"/>
</dbReference>
<dbReference type="InterPro" id="IPR011229">
    <property type="entry name" value="Cell_cycle_GpsB"/>
</dbReference>
<dbReference type="InterPro" id="IPR019933">
    <property type="entry name" value="DivIVA_domain"/>
</dbReference>
<dbReference type="InterPro" id="IPR007793">
    <property type="entry name" value="DivIVA_fam"/>
</dbReference>
<dbReference type="NCBIfam" id="TIGR03544">
    <property type="entry name" value="DivI1A_domain"/>
    <property type="match status" value="1"/>
</dbReference>
<dbReference type="NCBIfam" id="NF010725">
    <property type="entry name" value="PRK14127.1"/>
    <property type="match status" value="1"/>
</dbReference>
<dbReference type="PANTHER" id="PTHR35794:SF1">
    <property type="entry name" value="CELL CYCLE PROTEIN GPSB"/>
    <property type="match status" value="1"/>
</dbReference>
<dbReference type="PANTHER" id="PTHR35794">
    <property type="entry name" value="CELL DIVISION PROTEIN DIVIVA"/>
    <property type="match status" value="1"/>
</dbReference>
<dbReference type="Pfam" id="PF05103">
    <property type="entry name" value="DivIVA"/>
    <property type="match status" value="1"/>
</dbReference>
<dbReference type="PIRSF" id="PIRSF029938">
    <property type="entry name" value="UCP029938"/>
    <property type="match status" value="1"/>
</dbReference>
<evidence type="ECO:0000255" key="1">
    <source>
        <dbReference type="HAMAP-Rule" id="MF_02011"/>
    </source>
</evidence>
<keyword id="KW-0131">Cell cycle</keyword>
<keyword id="KW-0132">Cell division</keyword>
<keyword id="KW-0133">Cell shape</keyword>
<keyword id="KW-0175">Coiled coil</keyword>
<keyword id="KW-0963">Cytoplasm</keyword>
<keyword id="KW-1185">Reference proteome</keyword>
<accession>Q99YL4</accession>
<accession>Q48XF5</accession>
<organism>
    <name type="scientific">Streptococcus pyogenes serotype M1</name>
    <dbReference type="NCBI Taxonomy" id="301447"/>
    <lineage>
        <taxon>Bacteria</taxon>
        <taxon>Bacillati</taxon>
        <taxon>Bacillota</taxon>
        <taxon>Bacilli</taxon>
        <taxon>Lactobacillales</taxon>
        <taxon>Streptococcaceae</taxon>
        <taxon>Streptococcus</taxon>
    </lineage>
</organism>
<sequence>MTSIIYSPKDIFEQEFKTSMRGFDKKEVDEFLDNVIKDYENFNAQIEALKAENEALKKAKFQARNTVSATVQQPVPQPTRVAQSATNFDILKRISKLEKEVFGKQIIE</sequence>
<gene>
    <name evidence="1" type="primary">gpsB</name>
    <name type="ordered locus">SPy_1646</name>
    <name type="ordered locus">M5005_Spy1352</name>
</gene>
<proteinExistence type="inferred from homology"/>
<feature type="chain" id="PRO_0000337956" description="Cell cycle protein GpsB">
    <location>
        <begin position="1"/>
        <end position="108"/>
    </location>
</feature>
<feature type="coiled-coil region" evidence="1">
    <location>
        <begin position="32"/>
        <end position="69"/>
    </location>
</feature>
<reference key="1">
    <citation type="journal article" date="2001" name="Proc. Natl. Acad. Sci. U.S.A.">
        <title>Complete genome sequence of an M1 strain of Streptococcus pyogenes.</title>
        <authorList>
            <person name="Ferretti J.J."/>
            <person name="McShan W.M."/>
            <person name="Ajdic D.J."/>
            <person name="Savic D.J."/>
            <person name="Savic G."/>
            <person name="Lyon K."/>
            <person name="Primeaux C."/>
            <person name="Sezate S."/>
            <person name="Suvorov A.N."/>
            <person name="Kenton S."/>
            <person name="Lai H.S."/>
            <person name="Lin S.P."/>
            <person name="Qian Y."/>
            <person name="Jia H.G."/>
            <person name="Najar F.Z."/>
            <person name="Ren Q."/>
            <person name="Zhu H."/>
            <person name="Song L."/>
            <person name="White J."/>
            <person name="Yuan X."/>
            <person name="Clifton S.W."/>
            <person name="Roe B.A."/>
            <person name="McLaughlin R.E."/>
        </authorList>
    </citation>
    <scope>NUCLEOTIDE SEQUENCE [LARGE SCALE GENOMIC DNA]</scope>
    <source>
        <strain>ATCC 700294 / SF370 / Serotype M1</strain>
    </source>
</reference>
<reference key="2">
    <citation type="journal article" date="2005" name="J. Infect. Dis.">
        <title>Evolutionary origin and emergence of a highly successful clone of serotype M1 group A Streptococcus involved multiple horizontal gene transfer events.</title>
        <authorList>
            <person name="Sumby P."/>
            <person name="Porcella S.F."/>
            <person name="Madrigal A.G."/>
            <person name="Barbian K.D."/>
            <person name="Virtaneva K."/>
            <person name="Ricklefs S.M."/>
            <person name="Sturdevant D.E."/>
            <person name="Graham M.R."/>
            <person name="Vuopio-Varkila J."/>
            <person name="Hoe N.P."/>
            <person name="Musser J.M."/>
        </authorList>
    </citation>
    <scope>NUCLEOTIDE SEQUENCE [LARGE SCALE GENOMIC DNA]</scope>
    <source>
        <strain>ATCC BAA-947 / MGAS5005 / Serotype M1</strain>
    </source>
</reference>